<protein>
    <recommendedName>
        <fullName evidence="1">33 kDa chaperonin</fullName>
    </recommendedName>
    <alternativeName>
        <fullName evidence="1">Heat shock protein 33 homolog</fullName>
        <shortName evidence="1">HSP33</shortName>
    </alternativeName>
</protein>
<reference key="1">
    <citation type="journal article" date="2008" name="J. Bacteriol.">
        <title>Genome sequence of Staphylococcus aureus strain Newman and comparative analysis of staphylococcal genomes: polymorphism and evolution of two major pathogenicity islands.</title>
        <authorList>
            <person name="Baba T."/>
            <person name="Bae T."/>
            <person name="Schneewind O."/>
            <person name="Takeuchi F."/>
            <person name="Hiramatsu K."/>
        </authorList>
    </citation>
    <scope>NUCLEOTIDE SEQUENCE [LARGE SCALE GENOMIC DNA]</scope>
    <source>
        <strain>Newman</strain>
    </source>
</reference>
<accession>A6QEG4</accession>
<evidence type="ECO:0000255" key="1">
    <source>
        <dbReference type="HAMAP-Rule" id="MF_00117"/>
    </source>
</evidence>
<sequence length="293" mass="31822">MTHDYIVKALAFDGEIRAYAALTTETVQEAQTRHYTWPTASAAMGRTMTATAMMGAMLKGDQKLTVTVDGQGPIGRIIADANAKGEVRAYVDHPQTHFPLNEQGKLDVRRAVGTNGSIMVVKDVGMKDYFSGASPIVSGELGEDFTYYYATSEQTPSSVGLGVLVNPDNTIKAAGGFIIQVMPGAKDETISKLEKAISEMTPVSKLIEQGLTPEGLLNEILGEDHVQILEKMPVQFECNCSHEKFLNAIKGLGEAEIQNMIKEDHGAEAVCHFCGNKYKYTEEELNVLLESLA</sequence>
<gene>
    <name evidence="1" type="primary">hslO</name>
    <name type="ordered locus">NWMN_0474</name>
</gene>
<comment type="function">
    <text evidence="1">Redox regulated molecular chaperone. Protects both thermally unfolding and oxidatively damaged proteins from irreversible aggregation. Plays an important role in the bacterial defense system toward oxidative stress.</text>
</comment>
<comment type="subcellular location">
    <subcellularLocation>
        <location evidence="1">Cytoplasm</location>
    </subcellularLocation>
</comment>
<comment type="PTM">
    <text evidence="1">Under oxidizing conditions two disulfide bonds are formed involving the reactive cysteines. Under reducing conditions zinc is bound to the reactive cysteines and the protein is inactive.</text>
</comment>
<comment type="similarity">
    <text evidence="1">Belongs to the HSP33 family.</text>
</comment>
<organism>
    <name type="scientific">Staphylococcus aureus (strain Newman)</name>
    <dbReference type="NCBI Taxonomy" id="426430"/>
    <lineage>
        <taxon>Bacteria</taxon>
        <taxon>Bacillati</taxon>
        <taxon>Bacillota</taxon>
        <taxon>Bacilli</taxon>
        <taxon>Bacillales</taxon>
        <taxon>Staphylococcaceae</taxon>
        <taxon>Staphylococcus</taxon>
    </lineage>
</organism>
<dbReference type="EMBL" id="AP009351">
    <property type="protein sequence ID" value="BAF66746.1"/>
    <property type="molecule type" value="Genomic_DNA"/>
</dbReference>
<dbReference type="RefSeq" id="WP_000148605.1">
    <property type="nucleotide sequence ID" value="NZ_JBBIAE010000016.1"/>
</dbReference>
<dbReference type="SMR" id="A6QEG4"/>
<dbReference type="KEGG" id="sae:NWMN_0474"/>
<dbReference type="HOGENOM" id="CLU_054493_1_0_9"/>
<dbReference type="Proteomes" id="UP000006386">
    <property type="component" value="Chromosome"/>
</dbReference>
<dbReference type="GO" id="GO:0005737">
    <property type="term" value="C:cytoplasm"/>
    <property type="evidence" value="ECO:0007669"/>
    <property type="project" value="UniProtKB-SubCell"/>
</dbReference>
<dbReference type="GO" id="GO:0044183">
    <property type="term" value="F:protein folding chaperone"/>
    <property type="evidence" value="ECO:0007669"/>
    <property type="project" value="TreeGrafter"/>
</dbReference>
<dbReference type="GO" id="GO:0051082">
    <property type="term" value="F:unfolded protein binding"/>
    <property type="evidence" value="ECO:0007669"/>
    <property type="project" value="UniProtKB-UniRule"/>
</dbReference>
<dbReference type="GO" id="GO:0042026">
    <property type="term" value="P:protein refolding"/>
    <property type="evidence" value="ECO:0007669"/>
    <property type="project" value="TreeGrafter"/>
</dbReference>
<dbReference type="CDD" id="cd00498">
    <property type="entry name" value="Hsp33"/>
    <property type="match status" value="1"/>
</dbReference>
<dbReference type="Gene3D" id="3.55.30.10">
    <property type="entry name" value="Hsp33 domain"/>
    <property type="match status" value="1"/>
</dbReference>
<dbReference type="Gene3D" id="3.90.1280.10">
    <property type="entry name" value="HSP33 redox switch-like"/>
    <property type="match status" value="1"/>
</dbReference>
<dbReference type="HAMAP" id="MF_00117">
    <property type="entry name" value="HslO"/>
    <property type="match status" value="1"/>
</dbReference>
<dbReference type="InterPro" id="IPR000397">
    <property type="entry name" value="Heat_shock_Hsp33"/>
</dbReference>
<dbReference type="InterPro" id="IPR016154">
    <property type="entry name" value="Heat_shock_Hsp33_C"/>
</dbReference>
<dbReference type="InterPro" id="IPR016153">
    <property type="entry name" value="Heat_shock_Hsp33_N"/>
</dbReference>
<dbReference type="NCBIfam" id="NF001033">
    <property type="entry name" value="PRK00114.1"/>
    <property type="match status" value="1"/>
</dbReference>
<dbReference type="PANTHER" id="PTHR30111">
    <property type="entry name" value="33 KDA CHAPERONIN"/>
    <property type="match status" value="1"/>
</dbReference>
<dbReference type="PANTHER" id="PTHR30111:SF1">
    <property type="entry name" value="33 KDA CHAPERONIN"/>
    <property type="match status" value="1"/>
</dbReference>
<dbReference type="Pfam" id="PF01430">
    <property type="entry name" value="HSP33"/>
    <property type="match status" value="1"/>
</dbReference>
<dbReference type="PIRSF" id="PIRSF005261">
    <property type="entry name" value="Heat_shock_Hsp33"/>
    <property type="match status" value="1"/>
</dbReference>
<dbReference type="SUPFAM" id="SSF64397">
    <property type="entry name" value="Hsp33 domain"/>
    <property type="match status" value="1"/>
</dbReference>
<dbReference type="SUPFAM" id="SSF118352">
    <property type="entry name" value="HSP33 redox switch-like"/>
    <property type="match status" value="1"/>
</dbReference>
<keyword id="KW-0143">Chaperone</keyword>
<keyword id="KW-0963">Cytoplasm</keyword>
<keyword id="KW-1015">Disulfide bond</keyword>
<keyword id="KW-0676">Redox-active center</keyword>
<keyword id="KW-0862">Zinc</keyword>
<feature type="chain" id="PRO_1000071359" description="33 kDa chaperonin">
    <location>
        <begin position="1"/>
        <end position="293"/>
    </location>
</feature>
<feature type="disulfide bond" description="Redox-active" evidence="1">
    <location>
        <begin position="238"/>
        <end position="240"/>
    </location>
</feature>
<feature type="disulfide bond" description="Redox-active" evidence="1">
    <location>
        <begin position="271"/>
        <end position="274"/>
    </location>
</feature>
<proteinExistence type="inferred from homology"/>
<name>HSLO_STAAE</name>